<feature type="signal peptide" evidence="2">
    <location>
        <begin position="1"/>
        <end position="17"/>
    </location>
</feature>
<feature type="chain" id="PRO_0000012804" description="G-protein coupled receptor 83">
    <location>
        <begin position="18"/>
        <end position="423"/>
    </location>
</feature>
<feature type="topological domain" description="Extracellular" evidence="2">
    <location>
        <begin position="18"/>
        <end position="71"/>
    </location>
</feature>
<feature type="transmembrane region" description="Helical; Name=1" evidence="2">
    <location>
        <begin position="72"/>
        <end position="92"/>
    </location>
</feature>
<feature type="topological domain" description="Cytoplasmic" evidence="2">
    <location>
        <begin position="93"/>
        <end position="107"/>
    </location>
</feature>
<feature type="transmembrane region" description="Helical; Name=2" evidence="2">
    <location>
        <begin position="108"/>
        <end position="129"/>
    </location>
</feature>
<feature type="topological domain" description="Extracellular" evidence="2">
    <location>
        <begin position="130"/>
        <end position="145"/>
    </location>
</feature>
<feature type="transmembrane region" description="Helical; Name=3" evidence="2">
    <location>
        <begin position="146"/>
        <end position="167"/>
    </location>
</feature>
<feature type="topological domain" description="Cytoplasmic" evidence="2">
    <location>
        <begin position="168"/>
        <end position="186"/>
    </location>
</feature>
<feature type="transmembrane region" description="Helical; Name=4" evidence="2">
    <location>
        <begin position="187"/>
        <end position="208"/>
    </location>
</feature>
<feature type="topological domain" description="Extracellular" evidence="2">
    <location>
        <begin position="209"/>
        <end position="238"/>
    </location>
</feature>
<feature type="transmembrane region" description="Helical; Name=5" evidence="2">
    <location>
        <begin position="239"/>
        <end position="260"/>
    </location>
</feature>
<feature type="topological domain" description="Cytoplasmic" evidence="2">
    <location>
        <begin position="261"/>
        <end position="293"/>
    </location>
</feature>
<feature type="transmembrane region" description="Helical; Name=6" evidence="2">
    <location>
        <begin position="294"/>
        <end position="315"/>
    </location>
</feature>
<feature type="topological domain" description="Extracellular" evidence="2">
    <location>
        <begin position="316"/>
        <end position="327"/>
    </location>
</feature>
<feature type="transmembrane region" description="Helical; Name=7" evidence="2">
    <location>
        <begin position="328"/>
        <end position="348"/>
    </location>
</feature>
<feature type="topological domain" description="Cytoplasmic" evidence="2">
    <location>
        <begin position="349"/>
        <end position="423"/>
    </location>
</feature>
<feature type="region of interest" description="Disordered" evidence="4">
    <location>
        <begin position="389"/>
        <end position="423"/>
    </location>
</feature>
<feature type="compositionally biased region" description="Polar residues" evidence="4">
    <location>
        <begin position="401"/>
        <end position="414"/>
    </location>
</feature>
<feature type="glycosylation site" description="N-linked (GlcNAc...) asparagine" evidence="2">
    <location>
        <position position="38"/>
    </location>
</feature>
<feature type="glycosylation site" description="N-linked (GlcNAc...) asparagine" evidence="2">
    <location>
        <position position="46"/>
    </location>
</feature>
<feature type="glycosylation site" description="N-linked (GlcNAc...) asparagine" evidence="2">
    <location>
        <position position="134"/>
    </location>
</feature>
<feature type="disulfide bond" evidence="3">
    <location>
        <begin position="144"/>
        <end position="224"/>
    </location>
</feature>
<feature type="splice variant" id="VSP_001988" description="In isoform 2." evidence="10">
    <location>
        <begin position="130"/>
        <end position="171"/>
    </location>
</feature>
<feature type="splice variant" id="VSP_001989" description="In isoform 3." evidence="10">
    <original>Q</original>
    <variation>QGLTAIAVDRHQGLELQKMVRPRGDGGELRSPSVTFVPSSLCPALFTCKRPWDFQESQSLHDTLFPPLE</variation>
    <location>
        <position position="171"/>
    </location>
</feature>
<feature type="splice variant" id="VSP_001990" description="In isoform 4." evidence="10">
    <original>Q</original>
    <variation>QRPWDFQESQSLHDTLFPPLE</variation>
    <location>
        <position position="171"/>
    </location>
</feature>
<sequence>MKVPPVLLLFLLSSVRATEQPQVVTEHPSMEAALTGPNASSHFWANYTFSDWQNFVGRRRYGAESQNPTVKALLIVAYSFTIVFSLFGNVLVCHVIFKNQRMHSATSLFIVNLAVADIMITLLNTPFTLVRFVNSTWVFGKGMCHVSRFAQYCSLHVSALTLTAIAVDRHQVIMHPLKPRISITKGVIYIAVIWVMATFFSLPHAICQKLFTFKYSEDIVRSLCLPDFPEPADLFWKYLDLATFILLYLLPLFIISVAYARVAKKLWLCNTIGDVTTEQYLALRRKKKTTVKMLVLVVVLFALCWFPLNCYVLLLSSKAIHTNNALYFAFHWFAMSSTCYNPFIYCWLNENFRVELKALLSMCQRPPKPQEDRLPSPVPSFRVAWTEKSHGRRAPLPNHHLPSSQIQSGKTDLSSVEPVVAMS</sequence>
<proteinExistence type="evidence at protein level"/>
<keyword id="KW-0025">Alternative splicing</keyword>
<keyword id="KW-1003">Cell membrane</keyword>
<keyword id="KW-1015">Disulfide bond</keyword>
<keyword id="KW-0297">G-protein coupled receptor</keyword>
<keyword id="KW-0325">Glycoprotein</keyword>
<keyword id="KW-0472">Membrane</keyword>
<keyword id="KW-0675">Receptor</keyword>
<keyword id="KW-1185">Reference proteome</keyword>
<keyword id="KW-0732">Signal</keyword>
<keyword id="KW-0807">Transducer</keyword>
<keyword id="KW-0812">Transmembrane</keyword>
<keyword id="KW-1133">Transmembrane helix</keyword>
<comment type="function">
    <text evidence="7 8 9">G-protein coupled receptor for PEN, a neuropeptide produced from the precursor protein, proSAAS (encoded by PCSK1N). Acts through a G(i)- and G(q)-alpha-alpha-mediated pathway in response to PEN (PubMed:27117253). Plays a role in food intake and body weight regulation (PubMed:23744028). May contribute to the regulation of anxiety-related behaviors (PubMed:34512237).</text>
</comment>
<comment type="subcellular location">
    <subcellularLocation>
        <location evidence="8">Cell membrane</location>
        <topology evidence="2">Multi-pass membrane protein</topology>
    </subcellularLocation>
    <text evidence="7 8">Colocalizes with GPR171 in the paraventricular nucleus (PubMed:27117253). Colocalizes with the ghrelin receptor GHSR1A in the hypothalamus (PubMed:23744028).</text>
</comment>
<comment type="alternative products">
    <event type="alternative splicing"/>
    <isoform>
        <id>P30731-1</id>
        <name>1</name>
        <sequence type="displayed"/>
    </isoform>
    <isoform>
        <id>P30731-2</id>
        <name>2</name>
        <name>RP39</name>
        <sequence type="described" ref="VSP_001988"/>
    </isoform>
    <isoform>
        <id>P30731-3</id>
        <name>3</name>
        <name>RP82</name>
        <sequence type="described" ref="VSP_001989"/>
    </isoform>
    <isoform>
        <id>P30731-4</id>
        <name>4</name>
        <name>RP105</name>
        <sequence type="described" ref="VSP_001990"/>
    </isoform>
    <text>Experimental confirmation may be lacking for some isoforms.</text>
</comment>
<comment type="tissue specificity">
    <text evidence="5 7">Predominantly expressed in the brain, with moderate expression in the hypothalamus (PubMed:23744028). Expressed in the thymus (PubMed:16141072).</text>
</comment>
<comment type="induction">
    <text evidence="6">By glucocorticoids and cAMP in T-cells.</text>
</comment>
<comment type="disruption phenotype">
    <text evidence="7 9">Deficient mice have normal body weight and glucose tolerance when fed a regular chow diet, but are protected from obesity and glucose intolerance when challenged with a high-fat diet (PubMed:23744028). Knockdown of GPR83 has minimal impact on anxiety-like behaviors in female mice and a decrease in anxiety-related behaviors in male mice. In contrast, a local GPR83 knockdown in the basolateral amygdala leads to more anxiety-related behaviors in female mice (PubMed:34512237).</text>
</comment>
<comment type="similarity">
    <text evidence="3">Belongs to the G-protein coupled receptor 1 family.</text>
</comment>
<comment type="caution">
    <text evidence="1 8">NPY has been reported to be a ligand for GPR83 (By similarity). However, a more recent study found that radiolabeled PEN binding to GPR83 is not affected by NPY concentrations below 1 mM, only very high, non-physiological concentrations causes a partial, displacement of PEN binding (PubMed:27117253).</text>
</comment>
<protein>
    <recommendedName>
        <fullName>G-protein coupled receptor 83</fullName>
    </recommendedName>
    <alternativeName>
        <fullName evidence="10">Glucocorticoid-induced receptor</fullName>
    </alternativeName>
</protein>
<gene>
    <name evidence="12" type="primary">Gpr83</name>
    <name evidence="10" type="synonym">Gir</name>
    <name type="synonym">Gpr72</name>
    <name evidence="11" type="synonym">Jp05</name>
</gene>
<accession>P30731</accession>
<accession>Q542Q9</accession>
<accession>Q544C4</accession>
<name>GPR83_MOUSE</name>
<dbReference type="EMBL" id="M80481">
    <property type="protein sequence ID" value="AAA17882.1"/>
    <property type="molecule type" value="mRNA"/>
</dbReference>
<dbReference type="EMBL" id="AK081276">
    <property type="protein sequence ID" value="BAC38181.1"/>
    <property type="molecule type" value="mRNA"/>
</dbReference>
<dbReference type="EMBL" id="AK041527">
    <property type="protein sequence ID" value="BAC30974.1"/>
    <property type="molecule type" value="mRNA"/>
</dbReference>
<dbReference type="CCDS" id="CCDS22829.1">
    <molecule id="P30731-1"/>
</dbReference>
<dbReference type="CCDS" id="CCDS80959.1">
    <molecule id="P30731-2"/>
</dbReference>
<dbReference type="PIR" id="A40470">
    <property type="entry name" value="A40470"/>
</dbReference>
<dbReference type="PIR" id="B40470">
    <property type="entry name" value="B40470"/>
</dbReference>
<dbReference type="PIR" id="C40470">
    <property type="entry name" value="C40470"/>
</dbReference>
<dbReference type="PIR" id="D40470">
    <property type="entry name" value="D40470"/>
</dbReference>
<dbReference type="RefSeq" id="NP_001297663.1">
    <molecule id="P30731-2"/>
    <property type="nucleotide sequence ID" value="NM_001310734.1"/>
</dbReference>
<dbReference type="RefSeq" id="NP_034417.1">
    <molecule id="P30731-1"/>
    <property type="nucleotide sequence ID" value="NM_010287.3"/>
</dbReference>
<dbReference type="RefSeq" id="XP_006510080.1">
    <molecule id="P30731-4"/>
    <property type="nucleotide sequence ID" value="XM_006510017.4"/>
</dbReference>
<dbReference type="SMR" id="P30731"/>
<dbReference type="BioGRID" id="199922">
    <property type="interactions" value="1"/>
</dbReference>
<dbReference type="CORUM" id="P30731"/>
<dbReference type="FunCoup" id="P30731">
    <property type="interactions" value="540"/>
</dbReference>
<dbReference type="STRING" id="10090.ENSMUSP00000034408"/>
<dbReference type="GuidetoPHARMACOLOGY" id="119"/>
<dbReference type="GlyCosmos" id="P30731">
    <property type="glycosylation" value="3 sites, No reported glycans"/>
</dbReference>
<dbReference type="GlyGen" id="P30731">
    <property type="glycosylation" value="3 sites"/>
</dbReference>
<dbReference type="PhosphoSitePlus" id="P30731"/>
<dbReference type="PaxDb" id="10090-ENSMUSP00000034408"/>
<dbReference type="Antibodypedia" id="17864">
    <property type="antibodies" value="397 antibodies from 33 providers"/>
</dbReference>
<dbReference type="DNASU" id="14608"/>
<dbReference type="Ensembl" id="ENSMUST00000034408.12">
    <molecule id="P30731-1"/>
    <property type="protein sequence ID" value="ENSMUSP00000034408.6"/>
    <property type="gene ID" value="ENSMUSG00000031932.15"/>
</dbReference>
<dbReference type="Ensembl" id="ENSMUST00000115624.3">
    <molecule id="P30731-2"/>
    <property type="protein sequence ID" value="ENSMUSP00000111287.3"/>
    <property type="gene ID" value="ENSMUSG00000031932.15"/>
</dbReference>
<dbReference type="GeneID" id="14608"/>
<dbReference type="KEGG" id="mmu:14608"/>
<dbReference type="UCSC" id="uc009off.1">
    <molecule id="P30731-1"/>
    <property type="organism name" value="mouse"/>
</dbReference>
<dbReference type="AGR" id="MGI:95712"/>
<dbReference type="CTD" id="10888"/>
<dbReference type="MGI" id="MGI:95712">
    <property type="gene designation" value="Gpr83"/>
</dbReference>
<dbReference type="VEuPathDB" id="HostDB:ENSMUSG00000031932"/>
<dbReference type="eggNOG" id="KOG3656">
    <property type="taxonomic scope" value="Eukaryota"/>
</dbReference>
<dbReference type="GeneTree" id="ENSGT00940000154336"/>
<dbReference type="HOGENOM" id="CLU_009579_6_1_1"/>
<dbReference type="InParanoid" id="P30731"/>
<dbReference type="OMA" id="IYISVIW"/>
<dbReference type="OrthoDB" id="5952899at2759"/>
<dbReference type="PhylomeDB" id="P30731"/>
<dbReference type="TreeFam" id="TF315303"/>
<dbReference type="Reactome" id="R-MMU-418555">
    <property type="pathway name" value="G alpha (s) signalling events"/>
</dbReference>
<dbReference type="BioGRID-ORCS" id="14608">
    <property type="hits" value="0 hits in 76 CRISPR screens"/>
</dbReference>
<dbReference type="PRO" id="PR:P30731"/>
<dbReference type="Proteomes" id="UP000000589">
    <property type="component" value="Chromosome 9"/>
</dbReference>
<dbReference type="RNAct" id="P30731">
    <property type="molecule type" value="protein"/>
</dbReference>
<dbReference type="Bgee" id="ENSMUSG00000031932">
    <property type="expression patterns" value="Expressed in olfactory tubercle and 87 other cell types or tissues"/>
</dbReference>
<dbReference type="ExpressionAtlas" id="P30731">
    <property type="expression patterns" value="baseline and differential"/>
</dbReference>
<dbReference type="GO" id="GO:0005929">
    <property type="term" value="C:cilium"/>
    <property type="evidence" value="ECO:0000266"/>
    <property type="project" value="MGI"/>
</dbReference>
<dbReference type="GO" id="GO:0097730">
    <property type="term" value="C:non-motile cilium"/>
    <property type="evidence" value="ECO:0000314"/>
    <property type="project" value="MGI"/>
</dbReference>
<dbReference type="GO" id="GO:0005886">
    <property type="term" value="C:plasma membrane"/>
    <property type="evidence" value="ECO:0000314"/>
    <property type="project" value="UniProtKB"/>
</dbReference>
<dbReference type="GO" id="GO:0004930">
    <property type="term" value="F:G protein-coupled receptor activity"/>
    <property type="evidence" value="ECO:0000314"/>
    <property type="project" value="UniProtKB"/>
</dbReference>
<dbReference type="GO" id="GO:0008188">
    <property type="term" value="F:neuropeptide receptor activity"/>
    <property type="evidence" value="ECO:0000314"/>
    <property type="project" value="UniProtKB"/>
</dbReference>
<dbReference type="GO" id="GO:0004983">
    <property type="term" value="F:neuropeptide Y receptor activity"/>
    <property type="evidence" value="ECO:0007669"/>
    <property type="project" value="InterPro"/>
</dbReference>
<dbReference type="GO" id="GO:0007631">
    <property type="term" value="P:feeding behavior"/>
    <property type="evidence" value="ECO:0000315"/>
    <property type="project" value="UniProtKB"/>
</dbReference>
<dbReference type="GO" id="GO:0007186">
    <property type="term" value="P:G protein-coupled receptor signaling pathway"/>
    <property type="evidence" value="ECO:0000314"/>
    <property type="project" value="UniProtKB"/>
</dbReference>
<dbReference type="GO" id="GO:0007218">
    <property type="term" value="P:neuropeptide signaling pathway"/>
    <property type="evidence" value="ECO:0000314"/>
    <property type="project" value="UniProtKB"/>
</dbReference>
<dbReference type="GO" id="GO:0007200">
    <property type="term" value="P:phospholipase C-activating G protein-coupled receptor signaling pathway"/>
    <property type="evidence" value="ECO:0000314"/>
    <property type="project" value="UniProtKB"/>
</dbReference>
<dbReference type="GO" id="GO:0051384">
    <property type="term" value="P:response to glucocorticoid"/>
    <property type="evidence" value="ECO:0000314"/>
    <property type="project" value="MGI"/>
</dbReference>
<dbReference type="CDD" id="cd15389">
    <property type="entry name" value="7tmA_GPR83"/>
    <property type="match status" value="1"/>
</dbReference>
<dbReference type="FunFam" id="1.20.1070.10:FF:000191">
    <property type="entry name" value="Probable G-protein coupled receptor 83"/>
    <property type="match status" value="1"/>
</dbReference>
<dbReference type="Gene3D" id="1.20.1070.10">
    <property type="entry name" value="Rhodopsin 7-helix transmembrane proteins"/>
    <property type="match status" value="1"/>
</dbReference>
<dbReference type="InterPro" id="IPR000276">
    <property type="entry name" value="GPCR_Rhodpsn"/>
</dbReference>
<dbReference type="InterPro" id="IPR017452">
    <property type="entry name" value="GPCR_Rhodpsn_7TM"/>
</dbReference>
<dbReference type="InterPro" id="IPR000611">
    <property type="entry name" value="NPY_rcpt"/>
</dbReference>
<dbReference type="PANTHER" id="PTHR24238">
    <property type="entry name" value="G-PROTEIN COUPLED RECEPTOR"/>
    <property type="match status" value="1"/>
</dbReference>
<dbReference type="PANTHER" id="PTHR24238:SF57">
    <property type="entry name" value="G-PROTEIN COUPLED RECEPTOR 83"/>
    <property type="match status" value="1"/>
</dbReference>
<dbReference type="Pfam" id="PF00001">
    <property type="entry name" value="7tm_1"/>
    <property type="match status" value="1"/>
</dbReference>
<dbReference type="PRINTS" id="PR00237">
    <property type="entry name" value="GPCRRHODOPSN"/>
</dbReference>
<dbReference type="PRINTS" id="PR01012">
    <property type="entry name" value="NRPEPTIDEYR"/>
</dbReference>
<dbReference type="SMART" id="SM01381">
    <property type="entry name" value="7TM_GPCR_Srsx"/>
    <property type="match status" value="1"/>
</dbReference>
<dbReference type="SUPFAM" id="SSF81321">
    <property type="entry name" value="Family A G protein-coupled receptor-like"/>
    <property type="match status" value="1"/>
</dbReference>
<dbReference type="PROSITE" id="PS00237">
    <property type="entry name" value="G_PROTEIN_RECEP_F1_1"/>
    <property type="match status" value="1"/>
</dbReference>
<dbReference type="PROSITE" id="PS50262">
    <property type="entry name" value="G_PROTEIN_RECEP_F1_2"/>
    <property type="match status" value="1"/>
</dbReference>
<reference key="1">
    <citation type="journal article" date="1991" name="Mol. Endocrinol.">
        <title>Identification of a gene induced by glucocorticoids in murine T-cells: a potential G protein-coupled receptor.</title>
        <authorList>
            <person name="Harrigan M.T."/>
            <person name="Campbell N.F."/>
            <person name="Bourgeois S."/>
        </authorList>
    </citation>
    <scope>NUCLEOTIDE SEQUENCE [MRNA] (ISOFORMS 1; 2; 3 AND 4)</scope>
    <scope>INDUCTION</scope>
</reference>
<reference key="2">
    <citation type="journal article" date="2005" name="Science">
        <title>The transcriptional landscape of the mammalian genome.</title>
        <authorList>
            <person name="Carninci P."/>
            <person name="Kasukawa T."/>
            <person name="Katayama S."/>
            <person name="Gough J."/>
            <person name="Frith M.C."/>
            <person name="Maeda N."/>
            <person name="Oyama R."/>
            <person name="Ravasi T."/>
            <person name="Lenhard B."/>
            <person name="Wells C."/>
            <person name="Kodzius R."/>
            <person name="Shimokawa K."/>
            <person name="Bajic V.B."/>
            <person name="Brenner S.E."/>
            <person name="Batalov S."/>
            <person name="Forrest A.R."/>
            <person name="Zavolan M."/>
            <person name="Davis M.J."/>
            <person name="Wilming L.G."/>
            <person name="Aidinis V."/>
            <person name="Allen J.E."/>
            <person name="Ambesi-Impiombato A."/>
            <person name="Apweiler R."/>
            <person name="Aturaliya R.N."/>
            <person name="Bailey T.L."/>
            <person name="Bansal M."/>
            <person name="Baxter L."/>
            <person name="Beisel K.W."/>
            <person name="Bersano T."/>
            <person name="Bono H."/>
            <person name="Chalk A.M."/>
            <person name="Chiu K.P."/>
            <person name="Choudhary V."/>
            <person name="Christoffels A."/>
            <person name="Clutterbuck D.R."/>
            <person name="Crowe M.L."/>
            <person name="Dalla E."/>
            <person name="Dalrymple B.P."/>
            <person name="de Bono B."/>
            <person name="Della Gatta G."/>
            <person name="di Bernardo D."/>
            <person name="Down T."/>
            <person name="Engstrom P."/>
            <person name="Fagiolini M."/>
            <person name="Faulkner G."/>
            <person name="Fletcher C.F."/>
            <person name="Fukushima T."/>
            <person name="Furuno M."/>
            <person name="Futaki S."/>
            <person name="Gariboldi M."/>
            <person name="Georgii-Hemming P."/>
            <person name="Gingeras T.R."/>
            <person name="Gojobori T."/>
            <person name="Green R.E."/>
            <person name="Gustincich S."/>
            <person name="Harbers M."/>
            <person name="Hayashi Y."/>
            <person name="Hensch T.K."/>
            <person name="Hirokawa N."/>
            <person name="Hill D."/>
            <person name="Huminiecki L."/>
            <person name="Iacono M."/>
            <person name="Ikeo K."/>
            <person name="Iwama A."/>
            <person name="Ishikawa T."/>
            <person name="Jakt M."/>
            <person name="Kanapin A."/>
            <person name="Katoh M."/>
            <person name="Kawasawa Y."/>
            <person name="Kelso J."/>
            <person name="Kitamura H."/>
            <person name="Kitano H."/>
            <person name="Kollias G."/>
            <person name="Krishnan S.P."/>
            <person name="Kruger A."/>
            <person name="Kummerfeld S.K."/>
            <person name="Kurochkin I.V."/>
            <person name="Lareau L.F."/>
            <person name="Lazarevic D."/>
            <person name="Lipovich L."/>
            <person name="Liu J."/>
            <person name="Liuni S."/>
            <person name="McWilliam S."/>
            <person name="Madan Babu M."/>
            <person name="Madera M."/>
            <person name="Marchionni L."/>
            <person name="Matsuda H."/>
            <person name="Matsuzawa S."/>
            <person name="Miki H."/>
            <person name="Mignone F."/>
            <person name="Miyake S."/>
            <person name="Morris K."/>
            <person name="Mottagui-Tabar S."/>
            <person name="Mulder N."/>
            <person name="Nakano N."/>
            <person name="Nakauchi H."/>
            <person name="Ng P."/>
            <person name="Nilsson R."/>
            <person name="Nishiguchi S."/>
            <person name="Nishikawa S."/>
            <person name="Nori F."/>
            <person name="Ohara O."/>
            <person name="Okazaki Y."/>
            <person name="Orlando V."/>
            <person name="Pang K.C."/>
            <person name="Pavan W.J."/>
            <person name="Pavesi G."/>
            <person name="Pesole G."/>
            <person name="Petrovsky N."/>
            <person name="Piazza S."/>
            <person name="Reed J."/>
            <person name="Reid J.F."/>
            <person name="Ring B.Z."/>
            <person name="Ringwald M."/>
            <person name="Rost B."/>
            <person name="Ruan Y."/>
            <person name="Salzberg S.L."/>
            <person name="Sandelin A."/>
            <person name="Schneider C."/>
            <person name="Schoenbach C."/>
            <person name="Sekiguchi K."/>
            <person name="Semple C.A."/>
            <person name="Seno S."/>
            <person name="Sessa L."/>
            <person name="Sheng Y."/>
            <person name="Shibata Y."/>
            <person name="Shimada H."/>
            <person name="Shimada K."/>
            <person name="Silva D."/>
            <person name="Sinclair B."/>
            <person name="Sperling S."/>
            <person name="Stupka E."/>
            <person name="Sugiura K."/>
            <person name="Sultana R."/>
            <person name="Takenaka Y."/>
            <person name="Taki K."/>
            <person name="Tammoja K."/>
            <person name="Tan S.L."/>
            <person name="Tang S."/>
            <person name="Taylor M.S."/>
            <person name="Tegner J."/>
            <person name="Teichmann S.A."/>
            <person name="Ueda H.R."/>
            <person name="van Nimwegen E."/>
            <person name="Verardo R."/>
            <person name="Wei C.L."/>
            <person name="Yagi K."/>
            <person name="Yamanishi H."/>
            <person name="Zabarovsky E."/>
            <person name="Zhu S."/>
            <person name="Zimmer A."/>
            <person name="Hide W."/>
            <person name="Bult C."/>
            <person name="Grimmond S.M."/>
            <person name="Teasdale R.D."/>
            <person name="Liu E.T."/>
            <person name="Brusic V."/>
            <person name="Quackenbush J."/>
            <person name="Wahlestedt C."/>
            <person name="Mattick J.S."/>
            <person name="Hume D.A."/>
            <person name="Kai C."/>
            <person name="Sasaki D."/>
            <person name="Tomaru Y."/>
            <person name="Fukuda S."/>
            <person name="Kanamori-Katayama M."/>
            <person name="Suzuki M."/>
            <person name="Aoki J."/>
            <person name="Arakawa T."/>
            <person name="Iida J."/>
            <person name="Imamura K."/>
            <person name="Itoh M."/>
            <person name="Kato T."/>
            <person name="Kawaji H."/>
            <person name="Kawagashira N."/>
            <person name="Kawashima T."/>
            <person name="Kojima M."/>
            <person name="Kondo S."/>
            <person name="Konno H."/>
            <person name="Nakano K."/>
            <person name="Ninomiya N."/>
            <person name="Nishio T."/>
            <person name="Okada M."/>
            <person name="Plessy C."/>
            <person name="Shibata K."/>
            <person name="Shiraki T."/>
            <person name="Suzuki S."/>
            <person name="Tagami M."/>
            <person name="Waki K."/>
            <person name="Watahiki A."/>
            <person name="Okamura-Oho Y."/>
            <person name="Suzuki H."/>
            <person name="Kawai J."/>
            <person name="Hayashizaki Y."/>
        </authorList>
    </citation>
    <scope>NUCLEOTIDE SEQUENCE [LARGE SCALE MRNA] (ISOFORMS 1 AND 2)</scope>
    <source>
        <strain>C57BL/6J</strain>
        <tissue>Corpus striatum</tissue>
    </source>
</reference>
<reference key="3">
    <citation type="journal article" date="1998" name="Brain Res. Mol. Brain Res.">
        <title>Distribution of a glucocorticoid-induced orphan receptor (JP05) mRNA in the central nervous system of the mouse.</title>
        <authorList>
            <person name="Pesini P."/>
            <person name="Detheux M."/>
            <person name="Parmentier M."/>
            <person name="Hoekfelt T."/>
        </authorList>
    </citation>
    <scope>TISSUE SPECIFICITY</scope>
</reference>
<reference key="4">
    <citation type="journal article" date="2013" name="Nat. Commun.">
        <title>The orphan receptor Gpr83 regulates systemic energy metabolism via ghrelin-dependent and ghrelin-independent mechanisms.</title>
        <authorList>
            <person name="Mueller T.D."/>
            <person name="Mueller A."/>
            <person name="Yi C.X."/>
            <person name="Habegger K.M."/>
            <person name="Meyer C.W."/>
            <person name="Gaylinn B.D."/>
            <person name="Finan B."/>
            <person name="Heppner K."/>
            <person name="Trivedi C."/>
            <person name="Bielohuby M."/>
            <person name="Abplanalp W."/>
            <person name="Meyer F."/>
            <person name="Piechowski C.L."/>
            <person name="Pratzka J."/>
            <person name="Stemmer K."/>
            <person name="Holland J."/>
            <person name="Hembree J."/>
            <person name="Bhardwaj N."/>
            <person name="Raver C."/>
            <person name="Ottaway N."/>
            <person name="Krishna R."/>
            <person name="Sah R."/>
            <person name="Sallee F.R."/>
            <person name="Woods S.C."/>
            <person name="Perez-Tilve D."/>
            <person name="Bidlingmaier M."/>
            <person name="Thorner M.O."/>
            <person name="Krude H."/>
            <person name="Smiley D."/>
            <person name="DiMarchi R."/>
            <person name="Hofmann S."/>
            <person name="Pfluger P.T."/>
            <person name="Kleinau G."/>
            <person name="Biebermann H."/>
            <person name="Tschoep M.H."/>
        </authorList>
    </citation>
    <scope>SUBCELLULAR LOCATION</scope>
    <scope>FUNCTION</scope>
    <scope>DISRUPTION PHENOTYPE</scope>
    <scope>TISSUE SPECIFICITY</scope>
</reference>
<reference key="5">
    <citation type="journal article" date="2016" name="Sci. Signal.">
        <title>Identification of GPR83 as the receptor for the neuroendocrine peptide PEN.</title>
        <authorList>
            <person name="Gomes I."/>
            <person name="Bobeck E.N."/>
            <person name="Margolis E.B."/>
            <person name="Gupta A."/>
            <person name="Sierra S."/>
            <person name="Fakira A.K."/>
            <person name="Fujita W."/>
            <person name="Mueller T.D."/>
            <person name="Mueller A."/>
            <person name="Tschoep M.H."/>
            <person name="Kleinau G."/>
            <person name="Fricker L.D."/>
            <person name="Devi L.A."/>
        </authorList>
    </citation>
    <scope>FUNCTION</scope>
    <scope>SUBCELLULAR LOCATION</scope>
    <scope>LIGAND-BINDING</scope>
    <scope>CAUTION</scope>
</reference>
<reference key="6">
    <citation type="journal article" date="2021" name="Front. Neurosci.">
        <title>PEN Receptor GPR83 in Anxiety-Like Behaviors: Differential Regulation in Global vs Amygdalar Knockdown.</title>
        <authorList>
            <person name="Fakira A.K."/>
            <person name="Lueptow L.M."/>
            <person name="Trimbake N.A."/>
            <person name="Devi L.A."/>
        </authorList>
    </citation>
    <scope>DISRUPTION PHENOTYPE</scope>
    <scope>FUNCTION</scope>
</reference>
<evidence type="ECO:0000250" key="1">
    <source>
        <dbReference type="UniProtKB" id="Q8VHD7"/>
    </source>
</evidence>
<evidence type="ECO:0000255" key="2"/>
<evidence type="ECO:0000255" key="3">
    <source>
        <dbReference type="PROSITE-ProRule" id="PRU00521"/>
    </source>
</evidence>
<evidence type="ECO:0000256" key="4">
    <source>
        <dbReference type="SAM" id="MobiDB-lite"/>
    </source>
</evidence>
<evidence type="ECO:0000269" key="5">
    <source>
    </source>
</evidence>
<evidence type="ECO:0000269" key="6">
    <source>
    </source>
</evidence>
<evidence type="ECO:0000269" key="7">
    <source>
    </source>
</evidence>
<evidence type="ECO:0000269" key="8">
    <source>
    </source>
</evidence>
<evidence type="ECO:0000269" key="9">
    <source>
    </source>
</evidence>
<evidence type="ECO:0000303" key="10">
    <source>
    </source>
</evidence>
<evidence type="ECO:0000303" key="11">
    <source>
    </source>
</evidence>
<evidence type="ECO:0000312" key="12">
    <source>
        <dbReference type="MGI" id="MGI:95712"/>
    </source>
</evidence>
<organism>
    <name type="scientific">Mus musculus</name>
    <name type="common">Mouse</name>
    <dbReference type="NCBI Taxonomy" id="10090"/>
    <lineage>
        <taxon>Eukaryota</taxon>
        <taxon>Metazoa</taxon>
        <taxon>Chordata</taxon>
        <taxon>Craniata</taxon>
        <taxon>Vertebrata</taxon>
        <taxon>Euteleostomi</taxon>
        <taxon>Mammalia</taxon>
        <taxon>Eutheria</taxon>
        <taxon>Euarchontoglires</taxon>
        <taxon>Glires</taxon>
        <taxon>Rodentia</taxon>
        <taxon>Myomorpha</taxon>
        <taxon>Muroidea</taxon>
        <taxon>Muridae</taxon>
        <taxon>Murinae</taxon>
        <taxon>Mus</taxon>
        <taxon>Mus</taxon>
    </lineage>
</organism>